<keyword id="KW-0066">ATP synthesis</keyword>
<keyword id="KW-0138">CF(0)</keyword>
<keyword id="KW-0375">Hydrogen ion transport</keyword>
<keyword id="KW-0406">Ion transport</keyword>
<keyword id="KW-0472">Membrane</keyword>
<keyword id="KW-0496">Mitochondrion</keyword>
<keyword id="KW-0999">Mitochondrion inner membrane</keyword>
<keyword id="KW-0691">RNA editing</keyword>
<keyword id="KW-0812">Transmembrane</keyword>
<keyword id="KW-1133">Transmembrane helix</keyword>
<keyword id="KW-0813">Transport</keyword>
<gene>
    <name type="primary">ATP6</name>
</gene>
<organism>
    <name type="scientific">Brassica napus</name>
    <name type="common">Rape</name>
    <dbReference type="NCBI Taxonomy" id="3708"/>
    <lineage>
        <taxon>Eukaryota</taxon>
        <taxon>Viridiplantae</taxon>
        <taxon>Streptophyta</taxon>
        <taxon>Embryophyta</taxon>
        <taxon>Tracheophyta</taxon>
        <taxon>Spermatophyta</taxon>
        <taxon>Magnoliopsida</taxon>
        <taxon>eudicotyledons</taxon>
        <taxon>Gunneridae</taxon>
        <taxon>Pentapetalae</taxon>
        <taxon>rosids</taxon>
        <taxon>malvids</taxon>
        <taxon>Brassicales</taxon>
        <taxon>Brassicaceae</taxon>
        <taxon>Brassiceae</taxon>
        <taxon>Brassica</taxon>
    </lineage>
</organism>
<name>ATP6_BRANA</name>
<geneLocation type="mitochondrion"/>
<comment type="function">
    <text>Mitochondrial membrane ATP synthase (F(1)F(0) ATP synthase or Complex V) produces ATP from ADP in the presence of a proton gradient across the membrane which is generated by electron transport complexes of the respiratory chain. F-type ATPases consist of two structural domains, F(1) - containing the extramembraneous catalytic core and F(0) - containing the membrane proton channel, linked together by a central stalk and a peripheral stalk. During catalysis, ATP synthesis in the catalytic domain of F(1) is coupled via a rotary mechanism of the central stalk subunits to proton translocation. Key component of the proton channel; it may play a direct role in the translocation of protons across the membrane.</text>
</comment>
<comment type="subunit">
    <text>F-type ATPases have 2 components, CF(1) - the catalytic core - and CF(0) - the membrane proton channel. CF(1) has five subunits: alpha(3), beta(3), gamma(1), delta(1), epsilon(1). CF(0) has three main subunits: a, b and c.</text>
</comment>
<comment type="subcellular location">
    <subcellularLocation>
        <location>Mitochondrion inner membrane</location>
        <topology>Multi-pass membrane protein</topology>
    </subcellularLocation>
</comment>
<comment type="RNA editing">
    <location>
        <position position="34" evidence="2"/>
    </location>
</comment>
<comment type="similarity">
    <text evidence="3">Belongs to the ATPase A chain family.</text>
</comment>
<feature type="chain" id="PRO_0000082097" description="ATP synthase subunit a">
    <location>
        <begin position="1"/>
        <end position="260"/>
    </location>
</feature>
<feature type="transmembrane region" description="Helical" evidence="1">
    <location>
        <begin position="29"/>
        <end position="49"/>
    </location>
</feature>
<feature type="transmembrane region" description="Helical" evidence="1">
    <location>
        <begin position="95"/>
        <end position="115"/>
    </location>
</feature>
<feature type="transmembrane region" description="Helical" evidence="1">
    <location>
        <begin position="124"/>
        <end position="144"/>
    </location>
</feature>
<feature type="transmembrane region" description="Helical" evidence="1">
    <location>
        <begin position="151"/>
        <end position="171"/>
    </location>
</feature>
<feature type="transmembrane region" description="Helical" evidence="1">
    <location>
        <begin position="191"/>
        <end position="211"/>
    </location>
</feature>
<feature type="transmembrane region" description="Helical" evidence="1">
    <location>
        <begin position="213"/>
        <end position="233"/>
    </location>
</feature>
<feature type="transmembrane region" description="Helical" evidence="1">
    <location>
        <begin position="237"/>
        <end position="257"/>
    </location>
</feature>
<dbReference type="EMBL" id="X58277">
    <property type="protein sequence ID" value="CAA41216.1"/>
    <property type="status" value="ALT_SEQ"/>
    <property type="molecule type" value="Genomic_DNA"/>
</dbReference>
<dbReference type="SMR" id="Q31720"/>
<dbReference type="GO" id="GO:0005743">
    <property type="term" value="C:mitochondrial inner membrane"/>
    <property type="evidence" value="ECO:0007669"/>
    <property type="project" value="UniProtKB-SubCell"/>
</dbReference>
<dbReference type="GO" id="GO:0045259">
    <property type="term" value="C:proton-transporting ATP synthase complex"/>
    <property type="evidence" value="ECO:0007669"/>
    <property type="project" value="UniProtKB-KW"/>
</dbReference>
<dbReference type="GO" id="GO:0015078">
    <property type="term" value="F:proton transmembrane transporter activity"/>
    <property type="evidence" value="ECO:0007669"/>
    <property type="project" value="InterPro"/>
</dbReference>
<dbReference type="GO" id="GO:0015986">
    <property type="term" value="P:proton motive force-driven ATP synthesis"/>
    <property type="evidence" value="ECO:0007669"/>
    <property type="project" value="InterPro"/>
</dbReference>
<dbReference type="CDD" id="cd00310">
    <property type="entry name" value="ATP-synt_Fo_a_6"/>
    <property type="match status" value="1"/>
</dbReference>
<dbReference type="FunFam" id="1.20.120.220:FF:000003">
    <property type="entry name" value="ATP synthase subunit a"/>
    <property type="match status" value="1"/>
</dbReference>
<dbReference type="Gene3D" id="1.20.120.220">
    <property type="entry name" value="ATP synthase, F0 complex, subunit A"/>
    <property type="match status" value="1"/>
</dbReference>
<dbReference type="HAMAP" id="MF_01393">
    <property type="entry name" value="ATP_synth_a_bact"/>
    <property type="match status" value="1"/>
</dbReference>
<dbReference type="InterPro" id="IPR000568">
    <property type="entry name" value="ATP_synth_F0_asu"/>
</dbReference>
<dbReference type="InterPro" id="IPR023011">
    <property type="entry name" value="ATP_synth_F0_asu_AS"/>
</dbReference>
<dbReference type="InterPro" id="IPR045083">
    <property type="entry name" value="ATP_synth_F0_asu_bact/mt"/>
</dbReference>
<dbReference type="InterPro" id="IPR035908">
    <property type="entry name" value="F0_ATP_A_sf"/>
</dbReference>
<dbReference type="NCBIfam" id="TIGR01131">
    <property type="entry name" value="ATP_synt_6_or_A"/>
    <property type="match status" value="1"/>
</dbReference>
<dbReference type="NCBIfam" id="NF004482">
    <property type="entry name" value="PRK05815.2-4"/>
    <property type="match status" value="1"/>
</dbReference>
<dbReference type="PANTHER" id="PTHR11410">
    <property type="entry name" value="ATP SYNTHASE SUBUNIT A"/>
    <property type="match status" value="1"/>
</dbReference>
<dbReference type="PANTHER" id="PTHR11410:SF0">
    <property type="entry name" value="ATP SYNTHASE SUBUNIT A"/>
    <property type="match status" value="1"/>
</dbReference>
<dbReference type="Pfam" id="PF00119">
    <property type="entry name" value="ATP-synt_A"/>
    <property type="match status" value="1"/>
</dbReference>
<dbReference type="PRINTS" id="PR00123">
    <property type="entry name" value="ATPASEA"/>
</dbReference>
<dbReference type="SUPFAM" id="SSF81336">
    <property type="entry name" value="F1F0 ATP synthase subunit A"/>
    <property type="match status" value="1"/>
</dbReference>
<dbReference type="PROSITE" id="PS00449">
    <property type="entry name" value="ATPASE_A"/>
    <property type="match status" value="1"/>
</dbReference>
<reference key="1">
    <citation type="journal article" date="1992" name="FEBS Lett.">
        <title>RNA editing of atp6 transcripts from male-sterile and normal cytoplasms of rapeseed (Brassica napus L.).</title>
        <authorList>
            <person name="Handa H."/>
            <person name="Nakajima K."/>
        </authorList>
    </citation>
    <scope>NUCLEOTIDE SEQUENCE [GENOMIC DNA]</scope>
    <scope>RNA EDITING</scope>
    <source>
        <strain>cv. Polima</strain>
    </source>
</reference>
<evidence type="ECO:0000255" key="1"/>
<evidence type="ECO:0000269" key="2">
    <source>
    </source>
</evidence>
<evidence type="ECO:0000305" key="3"/>
<proteinExistence type="evidence at transcript level"/>
<sequence>MQIGLVAQSPLDQFEIVPLIPMNIGNFYFSFTNSSLFMLLTLSFFLLLIHFITKKGGGNLVPNAWQSLVELLYDFVLNLVKEQIGGLSGNVKQMFFPCILVTFLFLLFCNLQGMIPYSFTVTSHFLITLALSFSIFIGITIVGFQRHGLHFFSFLLPAGVPLPLAPFLVLLELISYCFRALSLGIRLFANMMAGHSLVKILSGFAWTMLCMNEIFYFIGALGPLFIVLALTGLELGVAILQAYVFTILICIYLNDAINLH</sequence>
<accession>Q31720</accession>
<protein>
    <recommendedName>
        <fullName>ATP synthase subunit a</fullName>
    </recommendedName>
    <alternativeName>
        <fullName>F-ATPase protein 6</fullName>
    </alternativeName>
</protein>